<comment type="function">
    <text evidence="1">Component of the cytosolic iron-sulfur (Fe-S) protein assembly (CIA) machinery required for the maturation of extramitochondrial Fe-S proteins. Part of an electron transfer chain functioning in an early step of cytosolic Fe-S biogenesis, facilitating the de novo assembly of a [4Fe-4S] cluster on the scaffold complex CFD1-NBP35. Electrons are transferred to DRE2 from NADPH via the FAD- and FMN-containing protein TAH18. TAH18-DRE2 are also required for the assembly of the diferric tyrosyl radical cofactor of ribonucleotide reductase (RNR), probably by providing electrons for reduction during radical cofactor maturation in the catalytic small subunit RNR2.</text>
</comment>
<comment type="cofactor">
    <cofactor evidence="1">
        <name>[2Fe-2S] cluster</name>
        <dbReference type="ChEBI" id="CHEBI:190135"/>
    </cofactor>
</comment>
<comment type="cofactor">
    <cofactor evidence="1">
        <name>[4Fe-4S] cluster</name>
        <dbReference type="ChEBI" id="CHEBI:49883"/>
    </cofactor>
</comment>
<comment type="subunit">
    <text evidence="1">Monomer. Interacts with TAH18. Interacts with MIA40.</text>
</comment>
<comment type="subcellular location">
    <subcellularLocation>
        <location evidence="1">Cytoplasm</location>
    </subcellularLocation>
    <subcellularLocation>
        <location evidence="1">Mitochondrion intermembrane space</location>
    </subcellularLocation>
</comment>
<comment type="domain">
    <text evidence="1">The C-terminal domain binds 2 Fe-S clusters but is otherwise mostly in an intrinsically disordered conformation.</text>
</comment>
<comment type="domain">
    <text evidence="1">The N-terminal domain has structural similarity with S-adenosyl-L-methionine-dependent methyltransferases, but does not bind S-adenosyl-L-methionine. It is required for correct assembly of the 2 Fe-S clusters.</text>
</comment>
<comment type="domain">
    <text evidence="1">The twin Cx2C motifs are involved in the recognition by the mitochondrial MIA40-ERV1 disulfide relay system. The formation of 2 disulfide bonds in the Cx2C motifs through dithiol/disulfide exchange reactions effectively traps the protein in the mitochondrial intermembrane space.</text>
</comment>
<comment type="similarity">
    <text evidence="1">Belongs to the anamorsin family.</text>
</comment>
<accession>C7YRS7</accession>
<organism>
    <name type="scientific">Fusarium vanettenii (strain ATCC MYA-4622 / CBS 123669 / FGSC 9596 / NRRL 45880 / 77-13-4)</name>
    <name type="common">Fusarium solani subsp. pisi</name>
    <dbReference type="NCBI Taxonomy" id="660122"/>
    <lineage>
        <taxon>Eukaryota</taxon>
        <taxon>Fungi</taxon>
        <taxon>Dikarya</taxon>
        <taxon>Ascomycota</taxon>
        <taxon>Pezizomycotina</taxon>
        <taxon>Sordariomycetes</taxon>
        <taxon>Hypocreomycetidae</taxon>
        <taxon>Hypocreales</taxon>
        <taxon>Nectriaceae</taxon>
        <taxon>Fusarium</taxon>
        <taxon>Fusarium solani species complex</taxon>
        <taxon>Fusarium vanettenii</taxon>
    </lineage>
</organism>
<protein>
    <recommendedName>
        <fullName evidence="1">Fe-S cluster assembly protein DRE2</fullName>
    </recommendedName>
    <alternativeName>
        <fullName evidence="1">Anamorsin homolog</fullName>
    </alternativeName>
</protein>
<proteinExistence type="inferred from homology"/>
<reference key="1">
    <citation type="journal article" date="2009" name="PLoS Genet.">
        <title>The genome of Nectria haematococca: contribution of supernumerary chromosomes to gene expansion.</title>
        <authorList>
            <person name="Coleman J.J."/>
            <person name="Rounsley S.D."/>
            <person name="Rodriguez-Carres M."/>
            <person name="Kuo A."/>
            <person name="Wasmann C.C."/>
            <person name="Grimwood J."/>
            <person name="Schmutz J."/>
            <person name="Taga M."/>
            <person name="White G.J."/>
            <person name="Zhou S."/>
            <person name="Schwartz D.C."/>
            <person name="Freitag M."/>
            <person name="Ma L.-J."/>
            <person name="Danchin E.G.J."/>
            <person name="Henrissat B."/>
            <person name="Coutinho P.M."/>
            <person name="Nelson D.R."/>
            <person name="Straney D."/>
            <person name="Napoli C.A."/>
            <person name="Barker B.M."/>
            <person name="Gribskov M."/>
            <person name="Rep M."/>
            <person name="Kroken S."/>
            <person name="Molnar I."/>
            <person name="Rensing C."/>
            <person name="Kennell J.C."/>
            <person name="Zamora J."/>
            <person name="Farman M.L."/>
            <person name="Selker E.U."/>
            <person name="Salamov A."/>
            <person name="Shapiro H."/>
            <person name="Pangilinan J."/>
            <person name="Lindquist E."/>
            <person name="Lamers C."/>
            <person name="Grigoriev I.V."/>
            <person name="Geiser D.M."/>
            <person name="Covert S.F."/>
            <person name="Temporini E."/>
            <person name="VanEtten H.D."/>
        </authorList>
    </citation>
    <scope>NUCLEOTIDE SEQUENCE [LARGE SCALE GENOMIC DNA]</scope>
    <source>
        <strain>ATCC MYA-4622 / CBS 123669 / FGSC 9596 / NRRL 45880 / 77-13-4</strain>
    </source>
</reference>
<feature type="chain" id="PRO_0000392395" description="Fe-S cluster assembly protein DRE2">
    <location>
        <begin position="1"/>
        <end position="316"/>
    </location>
</feature>
<feature type="region of interest" description="N-terminal SAM-like domain" evidence="1">
    <location>
        <begin position="7"/>
        <end position="139"/>
    </location>
</feature>
<feature type="region of interest" description="Linker" evidence="1">
    <location>
        <begin position="140"/>
        <end position="208"/>
    </location>
</feature>
<feature type="region of interest" description="Fe-S binding site A" evidence="1">
    <location>
        <begin position="218"/>
        <end position="234"/>
    </location>
</feature>
<feature type="region of interest" description="Fe-S binding site B" evidence="1">
    <location>
        <begin position="279"/>
        <end position="293"/>
    </location>
</feature>
<feature type="short sequence motif" description="Cx2C motif 1" evidence="1">
    <location>
        <begin position="279"/>
        <end position="282"/>
    </location>
</feature>
<feature type="short sequence motif" description="Cx2C motif 2" evidence="1">
    <location>
        <begin position="290"/>
        <end position="293"/>
    </location>
</feature>
<feature type="binding site" evidence="1">
    <location>
        <position position="218"/>
    </location>
    <ligand>
        <name>[2Fe-2S] cluster</name>
        <dbReference type="ChEBI" id="CHEBI:190135"/>
    </ligand>
</feature>
<feature type="binding site" evidence="1">
    <location>
        <position position="229"/>
    </location>
    <ligand>
        <name>[2Fe-2S] cluster</name>
        <dbReference type="ChEBI" id="CHEBI:190135"/>
    </ligand>
</feature>
<feature type="binding site" evidence="1">
    <location>
        <position position="232"/>
    </location>
    <ligand>
        <name>[2Fe-2S] cluster</name>
        <dbReference type="ChEBI" id="CHEBI:190135"/>
    </ligand>
</feature>
<feature type="binding site" evidence="1">
    <location>
        <position position="234"/>
    </location>
    <ligand>
        <name>[2Fe-2S] cluster</name>
        <dbReference type="ChEBI" id="CHEBI:190135"/>
    </ligand>
</feature>
<feature type="binding site" evidence="1">
    <location>
        <position position="279"/>
    </location>
    <ligand>
        <name>[4Fe-4S] cluster</name>
        <dbReference type="ChEBI" id="CHEBI:49883"/>
    </ligand>
</feature>
<feature type="binding site" evidence="1">
    <location>
        <position position="282"/>
    </location>
    <ligand>
        <name>[4Fe-4S] cluster</name>
        <dbReference type="ChEBI" id="CHEBI:49883"/>
    </ligand>
</feature>
<feature type="binding site" evidence="1">
    <location>
        <position position="290"/>
    </location>
    <ligand>
        <name>[4Fe-4S] cluster</name>
        <dbReference type="ChEBI" id="CHEBI:49883"/>
    </ligand>
</feature>
<feature type="binding site" evidence="1">
    <location>
        <position position="293"/>
    </location>
    <ligand>
        <name>[4Fe-4S] cluster</name>
        <dbReference type="ChEBI" id="CHEBI:49883"/>
    </ligand>
</feature>
<sequence length="316" mass="33860">MPVSKSVSPPKRTLLLAPPTLASHSSALSSVLADYDRSVTDLQMLDRLSAGLVKLPSSTYDRVLILADASFMLGESLALMNRAVLGPVAEALKPNGRLQSQDGNSLEESTLSKEAVLAGLVASRGGFEKPDYGDNEGAVTLKFGLKKKNQPAPLADGSVPLNFKKKKPVEVKPVVPVVPAGVGFIDLSDDLDDDDLIDEDTLMTEEDLLRPINIPVECQPKAGKRRRACKDCSCGLAERLVKEDAEKRAEADKKLESVKLATDDLAEIDFTVQGKVGSCGNCSLGDAFRCDGCPYIGLPPFKPGEEVRLLNNDVQL</sequence>
<dbReference type="EMBL" id="GG698899">
    <property type="protein sequence ID" value="EEU45513.1"/>
    <property type="molecule type" value="Genomic_DNA"/>
</dbReference>
<dbReference type="RefSeq" id="XP_003051226.1">
    <property type="nucleotide sequence ID" value="XM_003051180.1"/>
</dbReference>
<dbReference type="SMR" id="C7YRS7"/>
<dbReference type="FunCoup" id="C7YRS7">
    <property type="interactions" value="165"/>
</dbReference>
<dbReference type="STRING" id="660122.C7YRS7"/>
<dbReference type="EnsemblFungi" id="NechaT40847">
    <property type="protein sequence ID" value="NechaP40847"/>
    <property type="gene ID" value="NechaG40847"/>
</dbReference>
<dbReference type="GeneID" id="9666007"/>
<dbReference type="KEGG" id="nhe:NECHADRAFT_40847"/>
<dbReference type="VEuPathDB" id="FungiDB:NECHADRAFT_40847"/>
<dbReference type="eggNOG" id="KOG4020">
    <property type="taxonomic scope" value="Eukaryota"/>
</dbReference>
<dbReference type="HOGENOM" id="CLU_067152_1_0_1"/>
<dbReference type="InParanoid" id="C7YRS7"/>
<dbReference type="OMA" id="DFVMPVT"/>
<dbReference type="OrthoDB" id="311633at2759"/>
<dbReference type="Proteomes" id="UP000005206">
    <property type="component" value="Unassembled WGS sequence"/>
</dbReference>
<dbReference type="GO" id="GO:0005758">
    <property type="term" value="C:mitochondrial intermembrane space"/>
    <property type="evidence" value="ECO:0007669"/>
    <property type="project" value="UniProtKB-SubCell"/>
</dbReference>
<dbReference type="GO" id="GO:0051537">
    <property type="term" value="F:2 iron, 2 sulfur cluster binding"/>
    <property type="evidence" value="ECO:0007669"/>
    <property type="project" value="UniProtKB-UniRule"/>
</dbReference>
<dbReference type="GO" id="GO:0051539">
    <property type="term" value="F:4 iron, 4 sulfur cluster binding"/>
    <property type="evidence" value="ECO:0007669"/>
    <property type="project" value="UniProtKB-KW"/>
</dbReference>
<dbReference type="GO" id="GO:0009055">
    <property type="term" value="F:electron transfer activity"/>
    <property type="evidence" value="ECO:0007669"/>
    <property type="project" value="UniProtKB-UniRule"/>
</dbReference>
<dbReference type="GO" id="GO:0046872">
    <property type="term" value="F:metal ion binding"/>
    <property type="evidence" value="ECO:0007669"/>
    <property type="project" value="UniProtKB-KW"/>
</dbReference>
<dbReference type="GO" id="GO:0016226">
    <property type="term" value="P:iron-sulfur cluster assembly"/>
    <property type="evidence" value="ECO:0007669"/>
    <property type="project" value="UniProtKB-UniRule"/>
</dbReference>
<dbReference type="Gene3D" id="3.40.50.11000">
    <property type="entry name" value="Fe-S cluster assembly protein Dre2, N-terminal domain"/>
    <property type="match status" value="1"/>
</dbReference>
<dbReference type="HAMAP" id="MF_03115">
    <property type="entry name" value="Anamorsin"/>
    <property type="match status" value="1"/>
</dbReference>
<dbReference type="InterPro" id="IPR007785">
    <property type="entry name" value="Anamorsin"/>
</dbReference>
<dbReference type="InterPro" id="IPR046408">
    <property type="entry name" value="CIAPIN1"/>
</dbReference>
<dbReference type="InterPro" id="IPR031838">
    <property type="entry name" value="Dre2_N"/>
</dbReference>
<dbReference type="PANTHER" id="PTHR13273">
    <property type="entry name" value="ANAMORSIN"/>
    <property type="match status" value="1"/>
</dbReference>
<dbReference type="PANTHER" id="PTHR13273:SF14">
    <property type="entry name" value="ANAMORSIN"/>
    <property type="match status" value="1"/>
</dbReference>
<dbReference type="Pfam" id="PF05093">
    <property type="entry name" value="CIAPIN1"/>
    <property type="match status" value="1"/>
</dbReference>
<dbReference type="Pfam" id="PF16803">
    <property type="entry name" value="DRE2_N"/>
    <property type="match status" value="1"/>
</dbReference>
<evidence type="ECO:0000255" key="1">
    <source>
        <dbReference type="HAMAP-Rule" id="MF_03115"/>
    </source>
</evidence>
<name>DRE2_FUSV7</name>
<gene>
    <name evidence="1" type="primary">DRE2</name>
    <name type="ORF">NECHADRAFT_40847</name>
</gene>
<keyword id="KW-0001">2Fe-2S</keyword>
<keyword id="KW-0004">4Fe-4S</keyword>
<keyword id="KW-0963">Cytoplasm</keyword>
<keyword id="KW-0408">Iron</keyword>
<keyword id="KW-0411">Iron-sulfur</keyword>
<keyword id="KW-0479">Metal-binding</keyword>
<keyword id="KW-0496">Mitochondrion</keyword>
<keyword id="KW-1185">Reference proteome</keyword>